<organism>
    <name type="scientific">Mucor circinelloides f. lusitanicus</name>
    <name type="common">Mucor racemosus var. lusitanicus</name>
    <dbReference type="NCBI Taxonomy" id="29924"/>
    <lineage>
        <taxon>Eukaryota</taxon>
        <taxon>Fungi</taxon>
        <taxon>Fungi incertae sedis</taxon>
        <taxon>Mucoromycota</taxon>
        <taxon>Mucoromycotina</taxon>
        <taxon>Mucoromycetes</taxon>
        <taxon>Mucorales</taxon>
        <taxon>Mucorineae</taxon>
        <taxon>Mucoraceae</taxon>
        <taxon>Mucor</taxon>
    </lineage>
</organism>
<evidence type="ECO:0000255" key="1"/>
<evidence type="ECO:0000256" key="2">
    <source>
        <dbReference type="SAM" id="MobiDB-lite"/>
    </source>
</evidence>
<evidence type="ECO:0000305" key="3"/>
<protein>
    <recommendedName>
        <fullName>Chitin synthase 1</fullName>
        <ecNumber>2.4.1.16</ecNumber>
    </recommendedName>
    <alternativeName>
        <fullName>Chitin-UDP acetyl-glucosaminyl transferase 1</fullName>
    </alternativeName>
    <alternativeName>
        <fullName>Class-II chitin synthase 1</fullName>
    </alternativeName>
</protein>
<comment type="function">
    <text evidence="3">Polymerizes chitin, a structural polymer of the cell wall and septum, by transferring the sugar moiety of UDP-GlcNAc to the non-reducing end of the growing chitin polymer.</text>
</comment>
<comment type="catalytic activity">
    <reaction>
        <text>[(1-&gt;4)-N-acetyl-beta-D-glucosaminyl](n) + UDP-N-acetyl-alpha-D-glucosamine = [(1-&gt;4)-N-acetyl-beta-D-glucosaminyl](n+1) + UDP + H(+)</text>
        <dbReference type="Rhea" id="RHEA:16637"/>
        <dbReference type="Rhea" id="RHEA-COMP:9593"/>
        <dbReference type="Rhea" id="RHEA-COMP:9595"/>
        <dbReference type="ChEBI" id="CHEBI:15378"/>
        <dbReference type="ChEBI" id="CHEBI:17029"/>
        <dbReference type="ChEBI" id="CHEBI:57705"/>
        <dbReference type="ChEBI" id="CHEBI:58223"/>
        <dbReference type="EC" id="2.4.1.16"/>
    </reaction>
</comment>
<comment type="subcellular location">
    <subcellularLocation>
        <location evidence="3">Cell membrane</location>
        <topology evidence="1">Multi-pass membrane protein</topology>
    </subcellularLocation>
</comment>
<comment type="similarity">
    <text evidence="3">Belongs to the chitin synthase family. Class II subfamily.</text>
</comment>
<gene>
    <name type="primary">CHS1</name>
</gene>
<dbReference type="EC" id="2.4.1.16"/>
<dbReference type="EMBL" id="X99420">
    <property type="protein sequence ID" value="CAA67797.1"/>
    <property type="molecule type" value="Genomic_DNA"/>
</dbReference>
<dbReference type="SMR" id="Q12632"/>
<dbReference type="CAZy" id="GT2">
    <property type="family name" value="Glycosyltransferase Family 2"/>
</dbReference>
<dbReference type="GO" id="GO:0030428">
    <property type="term" value="C:cell septum"/>
    <property type="evidence" value="ECO:0007669"/>
    <property type="project" value="TreeGrafter"/>
</dbReference>
<dbReference type="GO" id="GO:0005886">
    <property type="term" value="C:plasma membrane"/>
    <property type="evidence" value="ECO:0007669"/>
    <property type="project" value="UniProtKB-SubCell"/>
</dbReference>
<dbReference type="GO" id="GO:0004100">
    <property type="term" value="F:chitin synthase activity"/>
    <property type="evidence" value="ECO:0007669"/>
    <property type="project" value="UniProtKB-EC"/>
</dbReference>
<dbReference type="GO" id="GO:0071555">
    <property type="term" value="P:cell wall organization"/>
    <property type="evidence" value="ECO:0007669"/>
    <property type="project" value="UniProtKB-KW"/>
</dbReference>
<dbReference type="GO" id="GO:0006031">
    <property type="term" value="P:chitin biosynthetic process"/>
    <property type="evidence" value="ECO:0007669"/>
    <property type="project" value="InterPro"/>
</dbReference>
<dbReference type="CDD" id="cd04190">
    <property type="entry name" value="Chitin_synth_C"/>
    <property type="match status" value="1"/>
</dbReference>
<dbReference type="InterPro" id="IPR004835">
    <property type="entry name" value="Chitin_synth"/>
</dbReference>
<dbReference type="InterPro" id="IPR004834">
    <property type="entry name" value="Chitin_synth_fun"/>
</dbReference>
<dbReference type="InterPro" id="IPR013616">
    <property type="entry name" value="Chitin_synth_N"/>
</dbReference>
<dbReference type="InterPro" id="IPR029044">
    <property type="entry name" value="Nucleotide-diphossugar_trans"/>
</dbReference>
<dbReference type="PANTHER" id="PTHR22914">
    <property type="entry name" value="CHITIN SYNTHASE"/>
    <property type="match status" value="1"/>
</dbReference>
<dbReference type="PANTHER" id="PTHR22914:SF9">
    <property type="entry name" value="CHITIN SYNTHASE 1"/>
    <property type="match status" value="1"/>
</dbReference>
<dbReference type="Pfam" id="PF01644">
    <property type="entry name" value="Chitin_synth_1"/>
    <property type="match status" value="1"/>
</dbReference>
<dbReference type="Pfam" id="PF08407">
    <property type="entry name" value="Chitin_synth_1N"/>
    <property type="match status" value="1"/>
</dbReference>
<dbReference type="SUPFAM" id="SSF53448">
    <property type="entry name" value="Nucleotide-diphospho-sugar transferases"/>
    <property type="match status" value="1"/>
</dbReference>
<keyword id="KW-1003">Cell membrane</keyword>
<keyword id="KW-0961">Cell wall biogenesis/degradation</keyword>
<keyword id="KW-0328">Glycosyltransferase</keyword>
<keyword id="KW-0472">Membrane</keyword>
<keyword id="KW-0808">Transferase</keyword>
<keyword id="KW-0812">Transmembrane</keyword>
<keyword id="KW-1133">Transmembrane helix</keyword>
<feature type="chain" id="PRO_0000193713" description="Chitin synthase 1">
    <location>
        <begin position="1"/>
        <end position="852"/>
    </location>
</feature>
<feature type="transmembrane region" description="Helical" evidence="1">
    <location>
        <begin position="492"/>
        <end position="509"/>
    </location>
</feature>
<feature type="transmembrane region" description="Helical" evidence="1">
    <location>
        <begin position="532"/>
        <end position="552"/>
    </location>
</feature>
<feature type="transmembrane region" description="Helical" evidence="1">
    <location>
        <begin position="572"/>
        <end position="592"/>
    </location>
</feature>
<feature type="transmembrane region" description="Helical" evidence="1">
    <location>
        <begin position="601"/>
        <end position="621"/>
    </location>
</feature>
<feature type="transmembrane region" description="Helical" evidence="1">
    <location>
        <begin position="686"/>
        <end position="706"/>
    </location>
</feature>
<feature type="transmembrane region" description="Helical" evidence="1">
    <location>
        <begin position="787"/>
        <end position="807"/>
    </location>
</feature>
<feature type="transmembrane region" description="Helical" evidence="1">
    <location>
        <begin position="830"/>
        <end position="850"/>
    </location>
</feature>
<feature type="region of interest" description="Disordered" evidence="2">
    <location>
        <begin position="27"/>
        <end position="46"/>
    </location>
</feature>
<feature type="region of interest" description="Disordered" evidence="2">
    <location>
        <begin position="53"/>
        <end position="97"/>
    </location>
</feature>
<feature type="compositionally biased region" description="Polar residues" evidence="2">
    <location>
        <begin position="53"/>
        <end position="74"/>
    </location>
</feature>
<sequence>MPSIKKQENSNAGGWFSSWFFSNTANEDQDDMLPSTSAAAGETNYARNQQTLSSLRSQKSANKPTTAQNRNSAATLVRTDTESYLDAPKSSRDQANGVLRRKVTRRLQLTNNNLVIDCPIPDRLLGALTFNDHDEFSQLRYTAATCEPDEFESRGFTLRPKIYNRETELFIVMTMYNEDEILFTRTMHGVMKNIAHLCSLKKSTMWGPDGWKKVVVCIVADGRQVVNKKVLDVLASMGVYQAGIAKNVVDDKPVKAHIYEYTTQISIDSDMNIKGSDKGIVPVQIMFCLKEKNAKKINSHRWFFNAFGPIIKPNVCILLDVGTRPGNSSIYQLWKVFDRNPLIGGACGEIRAMLGTACCQLLNPLVAAQNFEYKMSNILDKPLESVFGYISVLPGAFSAYRYAALKNDVNGHGPLEKYFIGEDLHSNLQGSSQSIKNTGLFEANMYLAEDRILCFELVAKKDERWLLQYVGSAFGETDVPSQLPEFISQRRRWLNGSFFAGVYGLIHFRKIWNSGHGFNRTLLLMIEGIYNVISLVFSWFSVGNFYIAFYFITKSLSASNVDPFGNGWGSRIFDFCKYAYAFLLFVIFICSMGNRPQGSKFLFMACLVGFAIIMCYMLFCSSWLIYKGIQLAAEKYDWTYDTTTNFQIAMSDPGLRNMVISLSSTYGIYLVSSCLHRQPFHMMTSFLPYLLLLPGYINILNIYAFCNTHDVSWGTKGDNSVAKDLGVVKVSEKEKGVKTVEIELPADQHDINCQYDEALFALDEKPSKDTGSGGSLTKDDYYRSFRTHLVLAWIACNALLVVFITTSDYESIFNASVGTTYMSIMLWVNCGLGIFRFLGSIMFLLLGIFTSG</sequence>
<reference key="1">
    <citation type="submission" date="1996-07" db="EMBL/GenBank/DDBJ databases">
        <authorList>
            <person name="Lopez-Matas A."/>
        </authorList>
    </citation>
    <scope>NUCLEOTIDE SEQUENCE [GENOMIC DNA]</scope>
    <source>
        <strain>ATCC 1216b / BCRC 32522 / CBS 277.49 / NRRL 3631</strain>
    </source>
</reference>
<name>CHS1_MUCCL</name>
<proteinExistence type="inferred from homology"/>
<accession>Q12632</accession>